<dbReference type="EC" id="1.1.99.39" evidence="5"/>
<dbReference type="EMBL" id="U00096">
    <property type="protein sequence ID" value="AAC74757.1"/>
    <property type="molecule type" value="Genomic_DNA"/>
</dbReference>
<dbReference type="EMBL" id="AP009048">
    <property type="protein sequence ID" value="BAA15451.1"/>
    <property type="molecule type" value="Genomic_DNA"/>
</dbReference>
<dbReference type="PIR" id="G64926">
    <property type="entry name" value="G64926"/>
</dbReference>
<dbReference type="RefSeq" id="NP_416202.1">
    <property type="nucleotide sequence ID" value="NC_000913.3"/>
</dbReference>
<dbReference type="RefSeq" id="WP_000613008.1">
    <property type="nucleotide sequence ID" value="NZ_SSZK01000001.1"/>
</dbReference>
<dbReference type="SMR" id="P77748"/>
<dbReference type="BioGRID" id="4259458">
    <property type="interactions" value="27"/>
</dbReference>
<dbReference type="DIP" id="DIP-11751N"/>
<dbReference type="FunCoup" id="P77748">
    <property type="interactions" value="101"/>
</dbReference>
<dbReference type="IntAct" id="P77748">
    <property type="interactions" value="3"/>
</dbReference>
<dbReference type="STRING" id="511145.b1687"/>
<dbReference type="jPOST" id="P77748"/>
<dbReference type="PaxDb" id="511145-b1687"/>
<dbReference type="EnsemblBacteria" id="AAC74757">
    <property type="protein sequence ID" value="AAC74757"/>
    <property type="gene ID" value="b1687"/>
</dbReference>
<dbReference type="GeneID" id="946189"/>
<dbReference type="KEGG" id="ecj:JW1677"/>
<dbReference type="KEGG" id="eco:b1687"/>
<dbReference type="KEGG" id="ecoc:C3026_09660"/>
<dbReference type="PATRIC" id="fig|1411691.4.peg.571"/>
<dbReference type="EchoBASE" id="EB3726"/>
<dbReference type="eggNOG" id="COG0247">
    <property type="taxonomic scope" value="Bacteria"/>
</dbReference>
<dbReference type="eggNOG" id="COG0277">
    <property type="taxonomic scope" value="Bacteria"/>
</dbReference>
<dbReference type="HOGENOM" id="CLU_010756_1_0_6"/>
<dbReference type="InParanoid" id="P77748"/>
<dbReference type="OMA" id="QDIIWHS"/>
<dbReference type="OrthoDB" id="9811557at2"/>
<dbReference type="PhylomeDB" id="P77748"/>
<dbReference type="BioCyc" id="EcoCyc:G6913-MONOMER"/>
<dbReference type="BioCyc" id="MetaCyc:G6913-MONOMER"/>
<dbReference type="PRO" id="PR:P77748"/>
<dbReference type="Proteomes" id="UP000000625">
    <property type="component" value="Chromosome"/>
</dbReference>
<dbReference type="GO" id="GO:0051539">
    <property type="term" value="F:4 iron, 4 sulfur cluster binding"/>
    <property type="evidence" value="ECO:0000314"/>
    <property type="project" value="EcoCyc"/>
</dbReference>
<dbReference type="GO" id="GO:0004458">
    <property type="term" value="F:D-lactate dehydrogenase (cytochrome) activity"/>
    <property type="evidence" value="ECO:0000318"/>
    <property type="project" value="GO_Central"/>
</dbReference>
<dbReference type="GO" id="GO:0008720">
    <property type="term" value="F:D-lactate dehydrogenase activity"/>
    <property type="evidence" value="ECO:0000318"/>
    <property type="project" value="GO_Central"/>
</dbReference>
<dbReference type="GO" id="GO:0071949">
    <property type="term" value="F:FAD binding"/>
    <property type="evidence" value="ECO:0007669"/>
    <property type="project" value="InterPro"/>
</dbReference>
<dbReference type="GO" id="GO:0050660">
    <property type="term" value="F:flavin adenine dinucleotide binding"/>
    <property type="evidence" value="ECO:0000314"/>
    <property type="project" value="EcoCyc"/>
</dbReference>
<dbReference type="GO" id="GO:0046872">
    <property type="term" value="F:metal ion binding"/>
    <property type="evidence" value="ECO:0007669"/>
    <property type="project" value="UniProtKB-KW"/>
</dbReference>
<dbReference type="GO" id="GO:1903457">
    <property type="term" value="P:lactate catabolic process"/>
    <property type="evidence" value="ECO:0000318"/>
    <property type="project" value="GO_Central"/>
</dbReference>
<dbReference type="FunFam" id="3.30.465.10:FF:000024">
    <property type="entry name" value="Oxidoreductase, FAD-binding protein"/>
    <property type="match status" value="1"/>
</dbReference>
<dbReference type="FunFam" id="3.30.70.2740:FF:000003">
    <property type="entry name" value="Oxidoreductase, FAD-binding, putative"/>
    <property type="match status" value="1"/>
</dbReference>
<dbReference type="Gene3D" id="3.30.465.10">
    <property type="match status" value="1"/>
</dbReference>
<dbReference type="Gene3D" id="3.30.70.2740">
    <property type="match status" value="1"/>
</dbReference>
<dbReference type="Gene3D" id="1.10.45.10">
    <property type="entry name" value="Vanillyl-alcohol Oxidase, Chain A, domain 4"/>
    <property type="match status" value="1"/>
</dbReference>
<dbReference type="InterPro" id="IPR017896">
    <property type="entry name" value="4Fe4S_Fe-S-bd"/>
</dbReference>
<dbReference type="InterPro" id="IPR017900">
    <property type="entry name" value="4Fe4S_Fe_S_CS"/>
</dbReference>
<dbReference type="InterPro" id="IPR004113">
    <property type="entry name" value="FAD-bd_oxidored_4_C"/>
</dbReference>
<dbReference type="InterPro" id="IPR016166">
    <property type="entry name" value="FAD-bd_PCMH"/>
</dbReference>
<dbReference type="InterPro" id="IPR036318">
    <property type="entry name" value="FAD-bd_PCMH-like_sf"/>
</dbReference>
<dbReference type="InterPro" id="IPR016169">
    <property type="entry name" value="FAD-bd_PCMH_sub2"/>
</dbReference>
<dbReference type="InterPro" id="IPR016164">
    <property type="entry name" value="FAD-linked_Oxase-like_C"/>
</dbReference>
<dbReference type="InterPro" id="IPR006094">
    <property type="entry name" value="Oxid_FAD_bind_N"/>
</dbReference>
<dbReference type="InterPro" id="IPR016171">
    <property type="entry name" value="Vanillyl_alc_oxidase_C-sub2"/>
</dbReference>
<dbReference type="PANTHER" id="PTHR11748:SF119">
    <property type="entry name" value="D-2-HYDROXYGLUTARATE DEHYDROGENASE"/>
    <property type="match status" value="1"/>
</dbReference>
<dbReference type="PANTHER" id="PTHR11748">
    <property type="entry name" value="D-LACTATE DEHYDROGENASE"/>
    <property type="match status" value="1"/>
</dbReference>
<dbReference type="Pfam" id="PF02913">
    <property type="entry name" value="FAD-oxidase_C"/>
    <property type="match status" value="1"/>
</dbReference>
<dbReference type="Pfam" id="PF01565">
    <property type="entry name" value="FAD_binding_4"/>
    <property type="match status" value="1"/>
</dbReference>
<dbReference type="SUPFAM" id="SSF46548">
    <property type="entry name" value="alpha-helical ferredoxin"/>
    <property type="match status" value="1"/>
</dbReference>
<dbReference type="SUPFAM" id="SSF56176">
    <property type="entry name" value="FAD-binding/transporter-associated domain-like"/>
    <property type="match status" value="1"/>
</dbReference>
<dbReference type="SUPFAM" id="SSF55103">
    <property type="entry name" value="FAD-linked oxidases, C-terminal domain"/>
    <property type="match status" value="1"/>
</dbReference>
<dbReference type="PROSITE" id="PS00198">
    <property type="entry name" value="4FE4S_FER_1"/>
    <property type="match status" value="1"/>
</dbReference>
<dbReference type="PROSITE" id="PS51379">
    <property type="entry name" value="4FE4S_FER_2"/>
    <property type="match status" value="1"/>
</dbReference>
<dbReference type="PROSITE" id="PS51387">
    <property type="entry name" value="FAD_PCMH"/>
    <property type="match status" value="1"/>
</dbReference>
<reference key="1">
    <citation type="journal article" date="1996" name="DNA Res.">
        <title>A 570-kb DNA sequence of the Escherichia coli K-12 genome corresponding to the 28.0-40.1 min region on the linkage map.</title>
        <authorList>
            <person name="Aiba H."/>
            <person name="Baba T."/>
            <person name="Fujita K."/>
            <person name="Hayashi K."/>
            <person name="Inada T."/>
            <person name="Isono K."/>
            <person name="Itoh T."/>
            <person name="Kasai H."/>
            <person name="Kashimoto K."/>
            <person name="Kimura S."/>
            <person name="Kitakawa M."/>
            <person name="Kitagawa M."/>
            <person name="Makino K."/>
            <person name="Miki T."/>
            <person name="Mizobuchi K."/>
            <person name="Mori H."/>
            <person name="Mori T."/>
            <person name="Motomura K."/>
            <person name="Nakade S."/>
            <person name="Nakamura Y."/>
            <person name="Nashimoto H."/>
            <person name="Nishio Y."/>
            <person name="Oshima T."/>
            <person name="Saito N."/>
            <person name="Sampei G."/>
            <person name="Seki Y."/>
            <person name="Sivasundaram S."/>
            <person name="Tagami H."/>
            <person name="Takeda J."/>
            <person name="Takemoto K."/>
            <person name="Takeuchi Y."/>
            <person name="Wada C."/>
            <person name="Yamamoto Y."/>
            <person name="Horiuchi T."/>
        </authorList>
    </citation>
    <scope>NUCLEOTIDE SEQUENCE [LARGE SCALE GENOMIC DNA]</scope>
    <source>
        <strain>K12 / W3110 / ATCC 27325 / DSM 5911</strain>
    </source>
</reference>
<reference key="2">
    <citation type="journal article" date="1997" name="Science">
        <title>The complete genome sequence of Escherichia coli K-12.</title>
        <authorList>
            <person name="Blattner F.R."/>
            <person name="Plunkett G. III"/>
            <person name="Bloch C.A."/>
            <person name="Perna N.T."/>
            <person name="Burland V."/>
            <person name="Riley M."/>
            <person name="Collado-Vides J."/>
            <person name="Glasner J.D."/>
            <person name="Rode C.K."/>
            <person name="Mayhew G.F."/>
            <person name="Gregor J."/>
            <person name="Davis N.W."/>
            <person name="Kirkpatrick H.A."/>
            <person name="Goeden M.A."/>
            <person name="Rose D.J."/>
            <person name="Mau B."/>
            <person name="Shao Y."/>
        </authorList>
    </citation>
    <scope>NUCLEOTIDE SEQUENCE [LARGE SCALE GENOMIC DNA]</scope>
    <source>
        <strain>K12 / MG1655 / ATCC 47076</strain>
    </source>
</reference>
<reference key="3">
    <citation type="journal article" date="2006" name="Mol. Syst. Biol.">
        <title>Highly accurate genome sequences of Escherichia coli K-12 strains MG1655 and W3110.</title>
        <authorList>
            <person name="Hayashi K."/>
            <person name="Morooka N."/>
            <person name="Yamamoto Y."/>
            <person name="Fujita K."/>
            <person name="Isono K."/>
            <person name="Choi S."/>
            <person name="Ohtsubo E."/>
            <person name="Baba T."/>
            <person name="Wanner B.L."/>
            <person name="Mori H."/>
            <person name="Horiuchi T."/>
        </authorList>
    </citation>
    <scope>NUCLEOTIDE SEQUENCE [LARGE SCALE GENOMIC DNA]</scope>
    <source>
        <strain>K12 / W3110 / ATCC 27325 / DSM 5911</strain>
    </source>
</reference>
<reference key="4">
    <citation type="journal article" date="2014" name="Metallomics">
        <title>An integrative computational model for large-scale identification of metalloproteins in microbial genomes: a focus on iron-sulfur cluster proteins.</title>
        <authorList>
            <person name="Estellon J."/>
            <person name="Ollagnier de Choudens S."/>
            <person name="Smadja M."/>
            <person name="Fontecave M."/>
            <person name="Vandenbrouck Y."/>
        </authorList>
    </citation>
    <scope>COFACTOR</scope>
</reference>
<reference key="5">
    <citation type="journal article" date="2022" name="Microorganisms">
        <title>Revealing a New Family of D-2-Hydroxyglutarate Dehydrogenases in Escherichia coli and Pantoea ananatis Encoded by ydiJ.</title>
        <authorList>
            <person name="Samsonov V.V."/>
            <person name="Kuznetsova A.A."/>
            <person name="Rostova J.G."/>
            <person name="Samsonova S.A."/>
            <person name="Ziyatdinov M.K."/>
            <person name="Kiriukhin M.Y."/>
        </authorList>
    </citation>
    <scope>FUNCTION</scope>
    <scope>CATALYTIC ACTIVITY</scope>
    <scope>BIOPHYSICOCHEMICAL PROPERTIES</scope>
    <scope>SUBSTRATE SPECIFICITY</scope>
    <scope>SUBUNIT</scope>
    <scope>DISRUPTION PHENOTYPE</scope>
    <scope>ACTIVITY REGULATION</scope>
    <source>
        <strain>K12 / MG1655 / ATCC 47076</strain>
    </source>
</reference>
<comment type="function">
    <text evidence="5">Catalyzes the oxidation of D-2-hydroxyglutarate (D-2-HGA) to 2-oxoglutarate. Appears to be the only D2HGDH in E.coli, providing the way to recycle D-2-HGA produced during L-serine synthesis by SerA, by converting it back to 2-oxoglutarate. The physiological molecule that functions as the primary electron acceptor during D-2-HGA oxidation by YdiJ in E.coli is unknown. Shows strict substrate specificity towards D-2-HGA, since it has no detectable activity on L-2-hydroxyglutarate, L-malate, D-malate, L-lactate, D-lactate, L-tartrate, D-tartrate, L-glycerate, D-glycerate, glutarate, or pyruvate.</text>
</comment>
<comment type="catalytic activity">
    <reaction evidence="5">
        <text>(R)-2-hydroxyglutarate + A = 2-oxoglutarate + AH2</text>
        <dbReference type="Rhea" id="RHEA:38295"/>
        <dbReference type="ChEBI" id="CHEBI:13193"/>
        <dbReference type="ChEBI" id="CHEBI:15801"/>
        <dbReference type="ChEBI" id="CHEBI:16810"/>
        <dbReference type="ChEBI" id="CHEBI:17499"/>
        <dbReference type="EC" id="1.1.99.39"/>
    </reaction>
    <physiologicalReaction direction="left-to-right" evidence="5">
        <dbReference type="Rhea" id="RHEA:38296"/>
    </physiologicalReaction>
</comment>
<comment type="cofactor">
    <cofactor evidence="4">
        <name>[4Fe-4S] cluster</name>
        <dbReference type="ChEBI" id="CHEBI:49883"/>
    </cofactor>
</comment>
<comment type="cofactor">
    <cofactor evidence="4">
        <name>FAD</name>
        <dbReference type="ChEBI" id="CHEBI:57692"/>
    </cofactor>
</comment>
<comment type="activity regulation">
    <text evidence="5">Activity is completely inhibited by the addition of 0.5 mM Mn(2+), Ni(2+), or Co(2+) and partially inhibited by 0.5 mM Zn(2+).</text>
</comment>
<comment type="biophysicochemical properties">
    <kinetics>
        <KM evidence="5">83 uM for (R)-2-hydroxyglutarate</KM>
        <Vmax evidence="5">1.15 umol/min/mg enzyme</Vmax>
        <text evidence="5">kcat is 13.9 sec(-1).</text>
    </kinetics>
    <phDependence>
        <text evidence="5">Optimum pH is 8.0.</text>
    </phDependence>
    <temperatureDependence>
        <text evidence="5">Optimum temperature is 45 degrees Celsius.</text>
    </temperatureDependence>
</comment>
<comment type="subunit">
    <text evidence="5">Homotetramer.</text>
</comment>
<comment type="disruption phenotype">
    <text evidence="5">Disruption of this gene leads to the significant accumulation of D-2-HGA.</text>
</comment>
<comment type="similarity">
    <text evidence="7">In the N-terminal section; belongs to the FAD-binding oxidoreductase/transferase type 4 family.</text>
</comment>
<evidence type="ECO:0000250" key="1">
    <source>
        <dbReference type="UniProtKB" id="Q8N465"/>
    </source>
</evidence>
<evidence type="ECO:0000255" key="2">
    <source>
        <dbReference type="PROSITE-ProRule" id="PRU00711"/>
    </source>
</evidence>
<evidence type="ECO:0000255" key="3">
    <source>
        <dbReference type="PROSITE-ProRule" id="PRU00718"/>
    </source>
</evidence>
<evidence type="ECO:0000269" key="4">
    <source>
    </source>
</evidence>
<evidence type="ECO:0000269" key="5">
    <source>
    </source>
</evidence>
<evidence type="ECO:0000303" key="6">
    <source>
    </source>
</evidence>
<evidence type="ECO:0000305" key="7"/>
<accession>P77748</accession>
<proteinExistence type="evidence at protein level"/>
<keyword id="KW-0004">4Fe-4S</keyword>
<keyword id="KW-0274">FAD</keyword>
<keyword id="KW-0285">Flavoprotein</keyword>
<keyword id="KW-0408">Iron</keyword>
<keyword id="KW-0411">Iron-sulfur</keyword>
<keyword id="KW-0479">Metal-binding</keyword>
<keyword id="KW-0560">Oxidoreductase</keyword>
<keyword id="KW-1185">Reference proteome</keyword>
<sequence length="1018" mass="113248">MIPQISQAPGVVQLVLNFLQELEQQGFTGDTATSYADRLTMSTDNSIYQLLPDAVVFPRSTADVALIARLAAQERYSSLIFTPRGGGTGTNGQALNQGIIVDMSRHMNRIIEINPEEGWVRVEAGVIKDQLNQYLKPFGYFFAPELSTSNRATLGGMINTDASGQGSLVYGKTSDHVLGVRAVLLGGDILDTQPLPVELAETLGKSNTTIGRIYNTVYQRCRQQRQLIIDNFPKLNRFLTGYDLRHVFNDEMTEFDLTRILTGSEGTLAFITEARLDITRLPKVRRLVNVKYDSFDSALRNAPFMVEARALSVETVDSKVLNLAREDIVWHSVSELITDVPDQEMLGLNIVEFAGDDEALIDERVNALCARLDELIASHQAGVIGWQVCRELAGVERIYAMRKKAVGLLGNAKGAAKPIPFAEDTCVPPEHLADYIAEFRALLDSHGLSYGMFGHVDAGVLHVRPALDMCDPQQEILMKQISDDVVALTAKYGGLLWGEHGKGFRAEYSPAFFGEELFAELRKVKAAFDPHNRLNPGKICPPEGLDAPMMKVDAVKRGTFDRQIPIAVRQQWRGAMECNGNGLCFNFDARSPMCPSMKITQNRIHSPKGRATLVREWLRLLADRGVDPLKLEQELPESGVSLRTLIARTRNSWHANKGEYDFSHEVKEAMSGCLACKACSTQCPIKIDVPEFRSRFLQLYHTRYLRPLRDHLVATVESYAPLMARAPKTFNFFINQPLVRKLSEKHIGMVDLPLLSVPSLQQQMVGHRSANMTLEQLESLNAEQKARTVLVVQDPFTSYYDAQVVADFVRLVEKLGFQPVLLPFSPNGKAQHIKGFLNRFAKTAKKTADFLNRMAKLGMPMVGVDPALVLCYRDEYKLALGEERGEFNVLLANEWLASALESQPVATVSGESWYFFGHCTEVTALPGAPAQWAAIFARFGAKLENVSVGCCGMAGTYGHEAKNHENSLGIYELSWHQAMQRLPRNRCLATGYSCRSQVKRVEGTGVRHPVQALLEIIK</sequence>
<protein>
    <recommendedName>
        <fullName evidence="6">D-2-hydroxyglutarate dehydrogenase</fullName>
        <shortName evidence="6">D2HGDH</shortName>
        <ecNumber evidence="5">1.1.99.39</ecNumber>
    </recommendedName>
</protein>
<gene>
    <name type="primary">ydiJ</name>
    <name type="ordered locus">b1687</name>
    <name type="ordered locus">JW1677</name>
</gene>
<organism>
    <name type="scientific">Escherichia coli (strain K12)</name>
    <dbReference type="NCBI Taxonomy" id="83333"/>
    <lineage>
        <taxon>Bacteria</taxon>
        <taxon>Pseudomonadati</taxon>
        <taxon>Pseudomonadota</taxon>
        <taxon>Gammaproteobacteria</taxon>
        <taxon>Enterobacterales</taxon>
        <taxon>Enterobacteriaceae</taxon>
        <taxon>Escherichia</taxon>
    </lineage>
</organism>
<feature type="chain" id="PRO_0000168994" description="D-2-hydroxyglutarate dehydrogenase">
    <location>
        <begin position="1"/>
        <end position="1018"/>
    </location>
</feature>
<feature type="domain" description="FAD-binding PCMH-type" evidence="3">
    <location>
        <begin position="48"/>
        <end position="281"/>
    </location>
</feature>
<feature type="domain" description="4Fe-4S ferredoxin-type" evidence="2">
    <location>
        <begin position="662"/>
        <end position="695"/>
    </location>
</feature>
<feature type="binding site" evidence="1">
    <location>
        <position position="402"/>
    </location>
    <ligand>
        <name>(R)-2-hydroxyglutarate</name>
        <dbReference type="ChEBI" id="CHEBI:15801"/>
    </ligand>
</feature>
<feature type="binding site" evidence="1">
    <location>
        <position position="500"/>
    </location>
    <ligand>
        <name>(R)-2-hydroxyglutarate</name>
        <dbReference type="ChEBI" id="CHEBI:15801"/>
    </ligand>
</feature>
<feature type="binding site" evidence="2">
    <location>
        <position position="673"/>
    </location>
    <ligand>
        <name>[4Fe-4S] cluster</name>
        <dbReference type="ChEBI" id="CHEBI:49883"/>
    </ligand>
</feature>
<feature type="binding site" evidence="2">
    <location>
        <position position="676"/>
    </location>
    <ligand>
        <name>[4Fe-4S] cluster</name>
        <dbReference type="ChEBI" id="CHEBI:49883"/>
    </ligand>
</feature>
<feature type="binding site" evidence="2">
    <location>
        <position position="679"/>
    </location>
    <ligand>
        <name>[4Fe-4S] cluster</name>
        <dbReference type="ChEBI" id="CHEBI:49883"/>
    </ligand>
</feature>
<feature type="binding site" evidence="2">
    <location>
        <position position="683"/>
    </location>
    <ligand>
        <name>[4Fe-4S] cluster</name>
        <dbReference type="ChEBI" id="CHEBI:49883"/>
    </ligand>
</feature>
<name>D2HDH_ECOLI</name>